<accession>A1KAT2</accession>
<organism>
    <name type="scientific">Azoarcus sp. (strain BH72)</name>
    <dbReference type="NCBI Taxonomy" id="418699"/>
    <lineage>
        <taxon>Bacteria</taxon>
        <taxon>Pseudomonadati</taxon>
        <taxon>Pseudomonadota</taxon>
        <taxon>Betaproteobacteria</taxon>
        <taxon>Rhodocyclales</taxon>
        <taxon>Zoogloeaceae</taxon>
        <taxon>Azoarcus</taxon>
    </lineage>
</organism>
<protein>
    <recommendedName>
        <fullName evidence="1">Indole-3-glycerol phosphate synthase</fullName>
        <shortName evidence="1">IGPS</shortName>
        <ecNumber evidence="1">4.1.1.48</ecNumber>
    </recommendedName>
</protein>
<reference key="1">
    <citation type="journal article" date="2006" name="Nat. Biotechnol.">
        <title>Complete genome of the mutualistic, N2-fixing grass endophyte Azoarcus sp. strain BH72.</title>
        <authorList>
            <person name="Krause A."/>
            <person name="Ramakumar A."/>
            <person name="Bartels D."/>
            <person name="Battistoni F."/>
            <person name="Bekel T."/>
            <person name="Boch J."/>
            <person name="Boehm M."/>
            <person name="Friedrich F."/>
            <person name="Hurek T."/>
            <person name="Krause L."/>
            <person name="Linke B."/>
            <person name="McHardy A.C."/>
            <person name="Sarkar A."/>
            <person name="Schneiker S."/>
            <person name="Syed A.A."/>
            <person name="Thauer R."/>
            <person name="Vorhoelter F.-J."/>
            <person name="Weidner S."/>
            <person name="Puehler A."/>
            <person name="Reinhold-Hurek B."/>
            <person name="Kaiser O."/>
            <person name="Goesmann A."/>
        </authorList>
    </citation>
    <scope>NUCLEOTIDE SEQUENCE [LARGE SCALE GENOMIC DNA]</scope>
    <source>
        <strain>BH72</strain>
    </source>
</reference>
<gene>
    <name evidence="1" type="primary">trpC</name>
    <name type="ordered locus">azo3322</name>
</gene>
<evidence type="ECO:0000255" key="1">
    <source>
        <dbReference type="HAMAP-Rule" id="MF_00134"/>
    </source>
</evidence>
<sequence>MSDILQKICAVKREEVTAALAAKPLAIVRAEAEAQPAARDFVGAIRGRITAGRPAVIAEIKKASPSKGVIREDFRPADIAPSYEAAGAACLSVLTDKPFFQGAPEYLQAARAACALPALRKDFLVDAYQVYEARAMGADAILLIAACLSLAEMQDMEAIAHGLGMGVLVEVHDGAELEQALKLRTPLVGINNRNLRTFEVSLQTTLGLLPRLAAEADRIVVTESGILAPADVALMRENGVNAFLVGEAFMRVPDPGAGLRALFG</sequence>
<feature type="chain" id="PRO_1000018433" description="Indole-3-glycerol phosphate synthase">
    <location>
        <begin position="1"/>
        <end position="264"/>
    </location>
</feature>
<name>TRPC_AZOSB</name>
<proteinExistence type="inferred from homology"/>
<dbReference type="EC" id="4.1.1.48" evidence="1"/>
<dbReference type="EMBL" id="AM406670">
    <property type="protein sequence ID" value="CAL95938.1"/>
    <property type="molecule type" value="Genomic_DNA"/>
</dbReference>
<dbReference type="RefSeq" id="WP_011767045.1">
    <property type="nucleotide sequence ID" value="NC_008702.1"/>
</dbReference>
<dbReference type="SMR" id="A1KAT2"/>
<dbReference type="STRING" id="62928.azo3322"/>
<dbReference type="KEGG" id="azo:azo3322"/>
<dbReference type="eggNOG" id="COG0134">
    <property type="taxonomic scope" value="Bacteria"/>
</dbReference>
<dbReference type="HOGENOM" id="CLU_034247_2_0_4"/>
<dbReference type="UniPathway" id="UPA00035">
    <property type="reaction ID" value="UER00043"/>
</dbReference>
<dbReference type="Proteomes" id="UP000002588">
    <property type="component" value="Chromosome"/>
</dbReference>
<dbReference type="GO" id="GO:0004425">
    <property type="term" value="F:indole-3-glycerol-phosphate synthase activity"/>
    <property type="evidence" value="ECO:0007669"/>
    <property type="project" value="UniProtKB-UniRule"/>
</dbReference>
<dbReference type="GO" id="GO:0004640">
    <property type="term" value="F:phosphoribosylanthranilate isomerase activity"/>
    <property type="evidence" value="ECO:0007669"/>
    <property type="project" value="TreeGrafter"/>
</dbReference>
<dbReference type="GO" id="GO:0000162">
    <property type="term" value="P:L-tryptophan biosynthetic process"/>
    <property type="evidence" value="ECO:0007669"/>
    <property type="project" value="UniProtKB-UniRule"/>
</dbReference>
<dbReference type="CDD" id="cd00331">
    <property type="entry name" value="IGPS"/>
    <property type="match status" value="1"/>
</dbReference>
<dbReference type="FunFam" id="3.20.20.70:FF:000024">
    <property type="entry name" value="Indole-3-glycerol phosphate synthase"/>
    <property type="match status" value="1"/>
</dbReference>
<dbReference type="Gene3D" id="3.20.20.70">
    <property type="entry name" value="Aldolase class I"/>
    <property type="match status" value="1"/>
</dbReference>
<dbReference type="HAMAP" id="MF_00134_B">
    <property type="entry name" value="IGPS_B"/>
    <property type="match status" value="1"/>
</dbReference>
<dbReference type="InterPro" id="IPR013785">
    <property type="entry name" value="Aldolase_TIM"/>
</dbReference>
<dbReference type="InterPro" id="IPR045186">
    <property type="entry name" value="Indole-3-glycerol_P_synth"/>
</dbReference>
<dbReference type="InterPro" id="IPR013798">
    <property type="entry name" value="Indole-3-glycerol_P_synth_dom"/>
</dbReference>
<dbReference type="InterPro" id="IPR001468">
    <property type="entry name" value="Indole-3-GlycerolPSynthase_CS"/>
</dbReference>
<dbReference type="InterPro" id="IPR011060">
    <property type="entry name" value="RibuloseP-bd_barrel"/>
</dbReference>
<dbReference type="NCBIfam" id="NF001370">
    <property type="entry name" value="PRK00278.1-2"/>
    <property type="match status" value="1"/>
</dbReference>
<dbReference type="NCBIfam" id="NF001373">
    <property type="entry name" value="PRK00278.1-6"/>
    <property type="match status" value="1"/>
</dbReference>
<dbReference type="NCBIfam" id="NF001377">
    <property type="entry name" value="PRK00278.2-4"/>
    <property type="match status" value="1"/>
</dbReference>
<dbReference type="PANTHER" id="PTHR22854:SF2">
    <property type="entry name" value="INDOLE-3-GLYCEROL-PHOSPHATE SYNTHASE"/>
    <property type="match status" value="1"/>
</dbReference>
<dbReference type="PANTHER" id="PTHR22854">
    <property type="entry name" value="TRYPTOPHAN BIOSYNTHESIS PROTEIN"/>
    <property type="match status" value="1"/>
</dbReference>
<dbReference type="Pfam" id="PF00218">
    <property type="entry name" value="IGPS"/>
    <property type="match status" value="1"/>
</dbReference>
<dbReference type="SUPFAM" id="SSF51366">
    <property type="entry name" value="Ribulose-phoshate binding barrel"/>
    <property type="match status" value="1"/>
</dbReference>
<dbReference type="PROSITE" id="PS00614">
    <property type="entry name" value="IGPS"/>
    <property type="match status" value="1"/>
</dbReference>
<comment type="catalytic activity">
    <reaction evidence="1">
        <text>1-(2-carboxyphenylamino)-1-deoxy-D-ribulose 5-phosphate + H(+) = (1S,2R)-1-C-(indol-3-yl)glycerol 3-phosphate + CO2 + H2O</text>
        <dbReference type="Rhea" id="RHEA:23476"/>
        <dbReference type="ChEBI" id="CHEBI:15377"/>
        <dbReference type="ChEBI" id="CHEBI:15378"/>
        <dbReference type="ChEBI" id="CHEBI:16526"/>
        <dbReference type="ChEBI" id="CHEBI:58613"/>
        <dbReference type="ChEBI" id="CHEBI:58866"/>
        <dbReference type="EC" id="4.1.1.48"/>
    </reaction>
</comment>
<comment type="pathway">
    <text evidence="1">Amino-acid biosynthesis; L-tryptophan biosynthesis; L-tryptophan from chorismate: step 4/5.</text>
</comment>
<comment type="similarity">
    <text evidence="1">Belongs to the TrpC family.</text>
</comment>
<keyword id="KW-0028">Amino-acid biosynthesis</keyword>
<keyword id="KW-0057">Aromatic amino acid biosynthesis</keyword>
<keyword id="KW-0210">Decarboxylase</keyword>
<keyword id="KW-0456">Lyase</keyword>
<keyword id="KW-1185">Reference proteome</keyword>
<keyword id="KW-0822">Tryptophan biosynthesis</keyword>